<sequence>MPELPEVEVTRRGIEPYVSGRKVERVEVRTPALRWPIPADLAKTLRGRVVRKVERRGKYLLFEIDAGWFIVHLGMTGTLRVLRHVPHPPAAAKHDHVDWIFDEFILRYRDPRRFGAVLWHPREAGDVLEHPLLAGLGVEPFSPAFSGALMHRLTRGRKVSVKQALLAGEIVVGVGNIYASESLFRAGIRPATAAGRVSLVRYDLLADAVRVTLAAAIEKGGSTLRDFVGSNGESGYFQLDYFVYDRAGLPCRVCGTPIKQIVQGQRSTYFCPTCQR</sequence>
<accession>Q145W8</accession>
<organism>
    <name type="scientific">Paraburkholderia xenovorans (strain LB400)</name>
    <dbReference type="NCBI Taxonomy" id="266265"/>
    <lineage>
        <taxon>Bacteria</taxon>
        <taxon>Pseudomonadati</taxon>
        <taxon>Pseudomonadota</taxon>
        <taxon>Betaproteobacteria</taxon>
        <taxon>Burkholderiales</taxon>
        <taxon>Burkholderiaceae</taxon>
        <taxon>Paraburkholderia</taxon>
    </lineage>
</organism>
<dbReference type="EC" id="3.2.2.23" evidence="2"/>
<dbReference type="EC" id="4.2.99.18" evidence="2"/>
<dbReference type="EMBL" id="CP000270">
    <property type="protein sequence ID" value="ABE28871.1"/>
    <property type="molecule type" value="Genomic_DNA"/>
</dbReference>
<dbReference type="RefSeq" id="WP_011486702.1">
    <property type="nucleotide sequence ID" value="NC_007951.1"/>
</dbReference>
<dbReference type="SMR" id="Q145W8"/>
<dbReference type="STRING" id="266265.Bxe_A4129"/>
<dbReference type="KEGG" id="bxb:DR64_1805"/>
<dbReference type="KEGG" id="bxe:Bxe_A4129"/>
<dbReference type="PATRIC" id="fig|266265.5.peg.353"/>
<dbReference type="eggNOG" id="COG0266">
    <property type="taxonomic scope" value="Bacteria"/>
</dbReference>
<dbReference type="OrthoDB" id="9800855at2"/>
<dbReference type="Proteomes" id="UP000001817">
    <property type="component" value="Chromosome 1"/>
</dbReference>
<dbReference type="GO" id="GO:0034039">
    <property type="term" value="F:8-oxo-7,8-dihydroguanine DNA N-glycosylase activity"/>
    <property type="evidence" value="ECO:0007669"/>
    <property type="project" value="TreeGrafter"/>
</dbReference>
<dbReference type="GO" id="GO:0140078">
    <property type="term" value="F:class I DNA-(apurinic or apyrimidinic site) endonuclease activity"/>
    <property type="evidence" value="ECO:0007669"/>
    <property type="project" value="UniProtKB-EC"/>
</dbReference>
<dbReference type="GO" id="GO:0003684">
    <property type="term" value="F:damaged DNA binding"/>
    <property type="evidence" value="ECO:0007669"/>
    <property type="project" value="InterPro"/>
</dbReference>
<dbReference type="GO" id="GO:0008270">
    <property type="term" value="F:zinc ion binding"/>
    <property type="evidence" value="ECO:0007669"/>
    <property type="project" value="UniProtKB-UniRule"/>
</dbReference>
<dbReference type="GO" id="GO:0006284">
    <property type="term" value="P:base-excision repair"/>
    <property type="evidence" value="ECO:0007669"/>
    <property type="project" value="InterPro"/>
</dbReference>
<dbReference type="CDD" id="cd08966">
    <property type="entry name" value="EcFpg-like_N"/>
    <property type="match status" value="1"/>
</dbReference>
<dbReference type="FunFam" id="1.10.8.50:FF:000003">
    <property type="entry name" value="Formamidopyrimidine-DNA glycosylase"/>
    <property type="match status" value="1"/>
</dbReference>
<dbReference type="FunFam" id="3.20.190.10:FF:000001">
    <property type="entry name" value="Formamidopyrimidine-DNA glycosylase"/>
    <property type="match status" value="1"/>
</dbReference>
<dbReference type="Gene3D" id="1.10.8.50">
    <property type="match status" value="1"/>
</dbReference>
<dbReference type="Gene3D" id="3.20.190.10">
    <property type="entry name" value="MutM-like, N-terminal"/>
    <property type="match status" value="1"/>
</dbReference>
<dbReference type="HAMAP" id="MF_00103">
    <property type="entry name" value="Fapy_DNA_glycosyl"/>
    <property type="match status" value="1"/>
</dbReference>
<dbReference type="InterPro" id="IPR015886">
    <property type="entry name" value="DNA_glyclase/AP_lyase_DNA-bd"/>
</dbReference>
<dbReference type="InterPro" id="IPR015887">
    <property type="entry name" value="DNA_glyclase_Znf_dom_DNA_BS"/>
</dbReference>
<dbReference type="InterPro" id="IPR020629">
    <property type="entry name" value="Formamido-pyr_DNA_Glyclase"/>
</dbReference>
<dbReference type="InterPro" id="IPR012319">
    <property type="entry name" value="FPG_cat"/>
</dbReference>
<dbReference type="InterPro" id="IPR035937">
    <property type="entry name" value="MutM-like_N-ter"/>
</dbReference>
<dbReference type="InterPro" id="IPR010979">
    <property type="entry name" value="Ribosomal_uS13-like_H2TH"/>
</dbReference>
<dbReference type="InterPro" id="IPR000214">
    <property type="entry name" value="Znf_DNA_glyclase/AP_lyase"/>
</dbReference>
<dbReference type="InterPro" id="IPR010663">
    <property type="entry name" value="Znf_FPG/IleRS"/>
</dbReference>
<dbReference type="NCBIfam" id="TIGR00577">
    <property type="entry name" value="fpg"/>
    <property type="match status" value="1"/>
</dbReference>
<dbReference type="NCBIfam" id="NF002211">
    <property type="entry name" value="PRK01103.1"/>
    <property type="match status" value="1"/>
</dbReference>
<dbReference type="PANTHER" id="PTHR22993">
    <property type="entry name" value="FORMAMIDOPYRIMIDINE-DNA GLYCOSYLASE"/>
    <property type="match status" value="1"/>
</dbReference>
<dbReference type="PANTHER" id="PTHR22993:SF9">
    <property type="entry name" value="FORMAMIDOPYRIMIDINE-DNA GLYCOSYLASE"/>
    <property type="match status" value="1"/>
</dbReference>
<dbReference type="Pfam" id="PF01149">
    <property type="entry name" value="Fapy_DNA_glyco"/>
    <property type="match status" value="1"/>
</dbReference>
<dbReference type="Pfam" id="PF06831">
    <property type="entry name" value="H2TH"/>
    <property type="match status" value="1"/>
</dbReference>
<dbReference type="Pfam" id="PF06827">
    <property type="entry name" value="zf-FPG_IleRS"/>
    <property type="match status" value="1"/>
</dbReference>
<dbReference type="SMART" id="SM00898">
    <property type="entry name" value="Fapy_DNA_glyco"/>
    <property type="match status" value="1"/>
</dbReference>
<dbReference type="SMART" id="SM01232">
    <property type="entry name" value="H2TH"/>
    <property type="match status" value="1"/>
</dbReference>
<dbReference type="SUPFAM" id="SSF57716">
    <property type="entry name" value="Glucocorticoid receptor-like (DNA-binding domain)"/>
    <property type="match status" value="1"/>
</dbReference>
<dbReference type="SUPFAM" id="SSF81624">
    <property type="entry name" value="N-terminal domain of MutM-like DNA repair proteins"/>
    <property type="match status" value="1"/>
</dbReference>
<dbReference type="SUPFAM" id="SSF46946">
    <property type="entry name" value="S13-like H2TH domain"/>
    <property type="match status" value="1"/>
</dbReference>
<dbReference type="PROSITE" id="PS51068">
    <property type="entry name" value="FPG_CAT"/>
    <property type="match status" value="1"/>
</dbReference>
<dbReference type="PROSITE" id="PS01242">
    <property type="entry name" value="ZF_FPG_1"/>
    <property type="match status" value="1"/>
</dbReference>
<dbReference type="PROSITE" id="PS51066">
    <property type="entry name" value="ZF_FPG_2"/>
    <property type="match status" value="1"/>
</dbReference>
<evidence type="ECO:0000250" key="1"/>
<evidence type="ECO:0000255" key="2">
    <source>
        <dbReference type="HAMAP-Rule" id="MF_00103"/>
    </source>
</evidence>
<comment type="function">
    <text evidence="2">Involved in base excision repair of DNA damaged by oxidation or by mutagenic agents. Acts as a DNA glycosylase that recognizes and removes damaged bases. Has a preference for oxidized purines, such as 7,8-dihydro-8-oxoguanine (8-oxoG). Has AP (apurinic/apyrimidinic) lyase activity and introduces nicks in the DNA strand. Cleaves the DNA backbone by beta-delta elimination to generate a single-strand break at the site of the removed base with both 3'- and 5'-phosphates.</text>
</comment>
<comment type="catalytic activity">
    <reaction evidence="2">
        <text>Hydrolysis of DNA containing ring-opened 7-methylguanine residues, releasing 2,6-diamino-4-hydroxy-5-(N-methyl)formamidopyrimidine.</text>
        <dbReference type="EC" id="3.2.2.23"/>
    </reaction>
</comment>
<comment type="catalytic activity">
    <reaction evidence="2">
        <text>2'-deoxyribonucleotide-(2'-deoxyribose 5'-phosphate)-2'-deoxyribonucleotide-DNA = a 3'-end 2'-deoxyribonucleotide-(2,3-dehydro-2,3-deoxyribose 5'-phosphate)-DNA + a 5'-end 5'-phospho-2'-deoxyribonucleoside-DNA + H(+)</text>
        <dbReference type="Rhea" id="RHEA:66592"/>
        <dbReference type="Rhea" id="RHEA-COMP:13180"/>
        <dbReference type="Rhea" id="RHEA-COMP:16897"/>
        <dbReference type="Rhea" id="RHEA-COMP:17067"/>
        <dbReference type="ChEBI" id="CHEBI:15378"/>
        <dbReference type="ChEBI" id="CHEBI:136412"/>
        <dbReference type="ChEBI" id="CHEBI:157695"/>
        <dbReference type="ChEBI" id="CHEBI:167181"/>
        <dbReference type="EC" id="4.2.99.18"/>
    </reaction>
</comment>
<comment type="cofactor">
    <cofactor evidence="2">
        <name>Zn(2+)</name>
        <dbReference type="ChEBI" id="CHEBI:29105"/>
    </cofactor>
    <text evidence="2">Binds 1 zinc ion per subunit.</text>
</comment>
<comment type="subunit">
    <text evidence="2">Monomer.</text>
</comment>
<comment type="similarity">
    <text evidence="2">Belongs to the FPG family.</text>
</comment>
<reference key="1">
    <citation type="journal article" date="2006" name="Proc. Natl. Acad. Sci. U.S.A.">
        <title>Burkholderia xenovorans LB400 harbors a multi-replicon, 9.73-Mbp genome shaped for versatility.</title>
        <authorList>
            <person name="Chain P.S.G."/>
            <person name="Denef V.J."/>
            <person name="Konstantinidis K.T."/>
            <person name="Vergez L.M."/>
            <person name="Agullo L."/>
            <person name="Reyes V.L."/>
            <person name="Hauser L."/>
            <person name="Cordova M."/>
            <person name="Gomez L."/>
            <person name="Gonzalez M."/>
            <person name="Land M."/>
            <person name="Lao V."/>
            <person name="Larimer F."/>
            <person name="LiPuma J.J."/>
            <person name="Mahenthiralingam E."/>
            <person name="Malfatti S.A."/>
            <person name="Marx C.J."/>
            <person name="Parnell J.J."/>
            <person name="Ramette A."/>
            <person name="Richardson P."/>
            <person name="Seeger M."/>
            <person name="Smith D."/>
            <person name="Spilker T."/>
            <person name="Sul W.J."/>
            <person name="Tsoi T.V."/>
            <person name="Ulrich L.E."/>
            <person name="Zhulin I.B."/>
            <person name="Tiedje J.M."/>
        </authorList>
    </citation>
    <scope>NUCLEOTIDE SEQUENCE [LARGE SCALE GENOMIC DNA]</scope>
    <source>
        <strain>LB400</strain>
    </source>
</reference>
<gene>
    <name evidence="2" type="primary">mutM</name>
    <name evidence="2" type="synonym">fpg</name>
    <name type="ordered locus">Bxeno_A0333</name>
    <name type="ORF">Bxe_A4129</name>
</gene>
<protein>
    <recommendedName>
        <fullName evidence="2">Formamidopyrimidine-DNA glycosylase</fullName>
        <shortName evidence="2">Fapy-DNA glycosylase</shortName>
        <ecNumber evidence="2">3.2.2.23</ecNumber>
    </recommendedName>
    <alternativeName>
        <fullName evidence="2">DNA-(apurinic or apyrimidinic site) lyase MutM</fullName>
        <shortName evidence="2">AP lyase MutM</shortName>
        <ecNumber evidence="2">4.2.99.18</ecNumber>
    </alternativeName>
</protein>
<proteinExistence type="inferred from homology"/>
<feature type="initiator methionine" description="Removed" evidence="1">
    <location>
        <position position="1"/>
    </location>
</feature>
<feature type="chain" id="PRO_1000008689" description="Formamidopyrimidine-DNA glycosylase">
    <location>
        <begin position="2"/>
        <end position="276"/>
    </location>
</feature>
<feature type="zinc finger region" description="FPG-type" evidence="2">
    <location>
        <begin position="242"/>
        <end position="276"/>
    </location>
</feature>
<feature type="active site" description="Schiff-base intermediate with DNA" evidence="2">
    <location>
        <position position="2"/>
    </location>
</feature>
<feature type="active site" description="Proton donor" evidence="2">
    <location>
        <position position="3"/>
    </location>
</feature>
<feature type="active site" description="Proton donor; for beta-elimination activity" evidence="2">
    <location>
        <position position="58"/>
    </location>
</feature>
<feature type="active site" description="Proton donor; for delta-elimination activity" evidence="2">
    <location>
        <position position="266"/>
    </location>
</feature>
<feature type="binding site" evidence="2">
    <location>
        <position position="94"/>
    </location>
    <ligand>
        <name>DNA</name>
        <dbReference type="ChEBI" id="CHEBI:16991"/>
    </ligand>
</feature>
<feature type="binding site" evidence="2">
    <location>
        <position position="112"/>
    </location>
    <ligand>
        <name>DNA</name>
        <dbReference type="ChEBI" id="CHEBI:16991"/>
    </ligand>
</feature>
<feature type="binding site" evidence="2">
    <location>
        <position position="157"/>
    </location>
    <ligand>
        <name>DNA</name>
        <dbReference type="ChEBI" id="CHEBI:16991"/>
    </ligand>
</feature>
<keyword id="KW-0227">DNA damage</keyword>
<keyword id="KW-0234">DNA repair</keyword>
<keyword id="KW-0238">DNA-binding</keyword>
<keyword id="KW-0326">Glycosidase</keyword>
<keyword id="KW-0378">Hydrolase</keyword>
<keyword id="KW-0456">Lyase</keyword>
<keyword id="KW-0479">Metal-binding</keyword>
<keyword id="KW-0511">Multifunctional enzyme</keyword>
<keyword id="KW-1185">Reference proteome</keyword>
<keyword id="KW-0862">Zinc</keyword>
<keyword id="KW-0863">Zinc-finger</keyword>
<name>FPG_PARXL</name>